<accession>P31591</accession>
<keyword id="KW-0150">Chloroplast</keyword>
<keyword id="KW-0472">Membrane</keyword>
<keyword id="KW-0934">Plastid</keyword>
<keyword id="KW-0793">Thylakoid</keyword>
<keyword id="KW-0812">Transmembrane</keyword>
<keyword id="KW-1133">Transmembrane helix</keyword>
<reference key="1">
    <citation type="journal article" date="1993" name="Nucleic Acids Res.">
        <title>Complete sequence of Euglena gracilis chloroplast DNA.</title>
        <authorList>
            <person name="Hallick R.B."/>
            <person name="Hong L."/>
            <person name="Drager R.G."/>
            <person name="Favreau M.R."/>
            <person name="Monfort A."/>
            <person name="Orsat B."/>
            <person name="Spielmann A."/>
            <person name="Stutz E."/>
        </authorList>
    </citation>
    <scope>NUCLEOTIDE SEQUENCE [LARGE SCALE GENOMIC DNA]</scope>
    <source>
        <strain>Z / UTEX 753</strain>
    </source>
</reference>
<protein>
    <recommendedName>
        <fullName evidence="1">Putative protein PsbN</fullName>
    </recommendedName>
</protein>
<proteinExistence type="uncertain"/>
<name>PSBN_EUGGR</name>
<dbReference type="EMBL" id="Z11874">
    <property type="status" value="NOT_ANNOTATED_CDS"/>
    <property type="molecule type" value="Genomic_DNA"/>
</dbReference>
<dbReference type="EMBL" id="X70810">
    <property type="protein sequence ID" value="CAA50130.1"/>
    <property type="molecule type" value="Genomic_DNA"/>
</dbReference>
<dbReference type="RefSeq" id="NP_041943.1">
    <property type="nucleotide sequence ID" value="NC_001603.2"/>
</dbReference>
<dbReference type="SMR" id="P31591"/>
<dbReference type="GeneID" id="807511"/>
<dbReference type="GO" id="GO:0009535">
    <property type="term" value="C:chloroplast thylakoid membrane"/>
    <property type="evidence" value="ECO:0007669"/>
    <property type="project" value="UniProtKB-SubCell"/>
</dbReference>
<dbReference type="GO" id="GO:0015979">
    <property type="term" value="P:photosynthesis"/>
    <property type="evidence" value="ECO:0007669"/>
    <property type="project" value="InterPro"/>
</dbReference>
<dbReference type="HAMAP" id="MF_00293">
    <property type="entry name" value="PSII_PsbN"/>
    <property type="match status" value="1"/>
</dbReference>
<dbReference type="InterPro" id="IPR003398">
    <property type="entry name" value="PSII_PsbN"/>
</dbReference>
<dbReference type="Pfam" id="PF02468">
    <property type="entry name" value="PsbN"/>
    <property type="match status" value="1"/>
</dbReference>
<comment type="function">
    <text evidence="1">May play a role in photosystem I and II biogenesis.</text>
</comment>
<comment type="subcellular location">
    <subcellularLocation>
        <location evidence="1">Plastid</location>
        <location evidence="1">Chloroplast thylakoid membrane</location>
        <topology evidence="1">Single-pass membrane protein</topology>
    </subcellularLocation>
</comment>
<comment type="similarity">
    <text evidence="1">Belongs to the PsbN family.</text>
</comment>
<comment type="caution">
    <text evidence="2">Could be the product of a pseudogene.</text>
</comment>
<comment type="caution">
    <text evidence="1">Originally thought to be a component of PSII; based on experiments in Synechocystis, N.tabacum and barley, and its absence from PSII in T.elongatus and T.vulcanus, this is probably not true.</text>
</comment>
<geneLocation type="chloroplast"/>
<sequence length="44" mass="5167">FKIISFLSTIFLGFFIISTTIYSIYMGFGPMSRKLKDPFEEHEN</sequence>
<feature type="chain" id="PRO_0000207898" description="Putative protein PsbN">
    <location>
        <begin position="1"/>
        <end position="44"/>
    </location>
</feature>
<feature type="transmembrane region" description="Helical" evidence="1">
    <location>
        <begin position="3"/>
        <end position="23"/>
    </location>
</feature>
<gene>
    <name evidence="1" type="primary">psbN</name>
</gene>
<evidence type="ECO:0000255" key="1">
    <source>
        <dbReference type="HAMAP-Rule" id="MF_00293"/>
    </source>
</evidence>
<evidence type="ECO:0000305" key="2"/>
<organism>
    <name type="scientific">Euglena gracilis</name>
    <dbReference type="NCBI Taxonomy" id="3039"/>
    <lineage>
        <taxon>Eukaryota</taxon>
        <taxon>Discoba</taxon>
        <taxon>Euglenozoa</taxon>
        <taxon>Euglenida</taxon>
        <taxon>Spirocuta</taxon>
        <taxon>Euglenophyceae</taxon>
        <taxon>Euglenales</taxon>
        <taxon>Euglenaceae</taxon>
        <taxon>Euglena</taxon>
    </lineage>
</organism>